<keyword id="KW-0010">Activator</keyword>
<keyword id="KW-0238">DNA-binding</keyword>
<keyword id="KW-0536">Nodulation</keyword>
<keyword id="KW-0678">Repressor</keyword>
<keyword id="KW-0804">Transcription</keyword>
<keyword id="KW-0805">Transcription regulation</keyword>
<proteinExistence type="inferred from homology"/>
<sequence length="314" mass="35827">MRFKGLDLNLLVALDALMTERNLTAAARKIHLSQPAMSAAVARLRTYFGDELFTMRGRELVPTPRAEGLAAPIREALLHIQLSIISRDAFDPAESSRRFRIILSDFMTIVFFRRIIDRVAREAPAVRFELLPFSDEHDELLRRGEVDFLVFPELFMSSAHPKATLFEETLVCVGCRTNKQLSRQLTVEKYMSMGHVAAKFGRALRPNIEEWFLLEHGLKRRIEVVVQGFGMIPPVLVDTVRIGTMPLRLAKHFEKQMLLKIVEPPLPLPSFTEAVQWPAAKNTDPASIWMRRIILQEAANMASAHEAARHRRHC</sequence>
<evidence type="ECO:0000255" key="1">
    <source>
        <dbReference type="PROSITE-ProRule" id="PRU00253"/>
    </source>
</evidence>
<evidence type="ECO:0000305" key="2"/>
<gene>
    <name type="primary">nodD1</name>
</gene>
<dbReference type="EMBL" id="U33192">
    <property type="protein sequence ID" value="AAB06562.1"/>
    <property type="molecule type" value="Genomic_DNA"/>
</dbReference>
<dbReference type="RefSeq" id="WP_260380606.1">
    <property type="nucleotide sequence ID" value="NZ_CP104171.1"/>
</dbReference>
<dbReference type="SMR" id="P50327"/>
<dbReference type="GO" id="GO:0003677">
    <property type="term" value="F:DNA binding"/>
    <property type="evidence" value="ECO:0007669"/>
    <property type="project" value="UniProtKB-KW"/>
</dbReference>
<dbReference type="GO" id="GO:0003700">
    <property type="term" value="F:DNA-binding transcription factor activity"/>
    <property type="evidence" value="ECO:0007669"/>
    <property type="project" value="InterPro"/>
</dbReference>
<dbReference type="CDD" id="cd08462">
    <property type="entry name" value="PBP2_NodD"/>
    <property type="match status" value="1"/>
</dbReference>
<dbReference type="Gene3D" id="3.40.190.10">
    <property type="entry name" value="Periplasmic binding protein-like II"/>
    <property type="match status" value="2"/>
</dbReference>
<dbReference type="Gene3D" id="1.10.10.10">
    <property type="entry name" value="Winged helix-like DNA-binding domain superfamily/Winged helix DNA-binding domain"/>
    <property type="match status" value="1"/>
</dbReference>
<dbReference type="InterPro" id="IPR050389">
    <property type="entry name" value="LysR-type_TF"/>
</dbReference>
<dbReference type="InterPro" id="IPR005119">
    <property type="entry name" value="LysR_subst-bd"/>
</dbReference>
<dbReference type="InterPro" id="IPR037416">
    <property type="entry name" value="NodD_PBP2"/>
</dbReference>
<dbReference type="InterPro" id="IPR000847">
    <property type="entry name" value="Tscrpt_reg_HTH_LysR"/>
</dbReference>
<dbReference type="InterPro" id="IPR036388">
    <property type="entry name" value="WH-like_DNA-bd_sf"/>
</dbReference>
<dbReference type="InterPro" id="IPR036390">
    <property type="entry name" value="WH_DNA-bd_sf"/>
</dbReference>
<dbReference type="PANTHER" id="PTHR30118:SF6">
    <property type="entry name" value="HTH-TYPE TRANSCRIPTIONAL REGULATOR LEUO"/>
    <property type="match status" value="1"/>
</dbReference>
<dbReference type="PANTHER" id="PTHR30118">
    <property type="entry name" value="HTH-TYPE TRANSCRIPTIONAL REGULATOR LEUO-RELATED"/>
    <property type="match status" value="1"/>
</dbReference>
<dbReference type="Pfam" id="PF00126">
    <property type="entry name" value="HTH_1"/>
    <property type="match status" value="1"/>
</dbReference>
<dbReference type="Pfam" id="PF03466">
    <property type="entry name" value="LysR_substrate"/>
    <property type="match status" value="1"/>
</dbReference>
<dbReference type="PRINTS" id="PR00039">
    <property type="entry name" value="HTHLYSR"/>
</dbReference>
<dbReference type="SUPFAM" id="SSF53850">
    <property type="entry name" value="Periplasmic binding protein-like II"/>
    <property type="match status" value="1"/>
</dbReference>
<dbReference type="SUPFAM" id="SSF46785">
    <property type="entry name" value="Winged helix' DNA-binding domain"/>
    <property type="match status" value="1"/>
</dbReference>
<dbReference type="PROSITE" id="PS50931">
    <property type="entry name" value="HTH_LYSR"/>
    <property type="match status" value="1"/>
</dbReference>
<accession>P50327</accession>
<feature type="chain" id="PRO_0000105707" description="Nodulation protein D 1">
    <location>
        <begin position="1"/>
        <end position="314"/>
    </location>
</feature>
<feature type="domain" description="HTH lysR-type" evidence="1">
    <location>
        <begin position="6"/>
        <end position="63"/>
    </location>
</feature>
<feature type="DNA-binding region" description="H-T-H motif" evidence="1">
    <location>
        <begin position="23"/>
        <end position="42"/>
    </location>
</feature>
<reference key="1">
    <citation type="journal article" date="1996" name="J. Bacteriol.">
        <title>Bradyrhizobium (Arachis) sp. strain NC92 contains two nodD genes involved in the repression of nodA and a nolA gene required for the efficient nodulation of host plants.</title>
        <authorList>
            <person name="Gillette W.K."/>
            <person name="Elkan G.H."/>
        </authorList>
    </citation>
    <scope>NUCLEOTIDE SEQUENCE [GENOMIC DNA]</scope>
</reference>
<comment type="function">
    <text>NodD regulates the expression of the nodABCFE genes which encode other nodulation proteins. NodD is also a negative regulator of its own expression. Binds flavonoids as inducers.</text>
</comment>
<comment type="miscellaneous">
    <text>There are at least two nodD genes in B.sp strain NC92.</text>
</comment>
<comment type="similarity">
    <text evidence="2">Belongs to the LysR transcriptional regulatory family.</text>
</comment>
<name>NODD1_BRASN</name>
<organism>
    <name type="scientific">Bradyrhizobium sp. (strain NC92)</name>
    <dbReference type="NCBI Taxonomy" id="55395"/>
    <lineage>
        <taxon>Bacteria</taxon>
        <taxon>Pseudomonadati</taxon>
        <taxon>Pseudomonadota</taxon>
        <taxon>Alphaproteobacteria</taxon>
        <taxon>Hyphomicrobiales</taxon>
        <taxon>Nitrobacteraceae</taxon>
        <taxon>Bradyrhizobium</taxon>
    </lineage>
</organism>
<protein>
    <recommendedName>
        <fullName>Nodulation protein D 1</fullName>
    </recommendedName>
</protein>